<keyword id="KW-0106">Calcium</keyword>
<keyword id="KW-0903">Direct protein sequencing</keyword>
<keyword id="KW-0325">Glycoprotein</keyword>
<name>CBG95_UNIPI</name>
<sequence>TSHGGGKAGKSKLLDVNY</sequence>
<dbReference type="GO" id="GO:0005509">
    <property type="term" value="F:calcium ion binding"/>
    <property type="evidence" value="ECO:0000314"/>
    <property type="project" value="UniProtKB"/>
</dbReference>
<dbReference type="GO" id="GO:0031215">
    <property type="term" value="P:shell calcification"/>
    <property type="evidence" value="ECO:0000314"/>
    <property type="project" value="UniProtKB"/>
</dbReference>
<evidence type="ECO:0000269" key="1">
    <source>
    </source>
</evidence>
<evidence type="ECO:0000269" key="2">
    <source>
    </source>
</evidence>
<evidence type="ECO:0000305" key="3"/>
<comment type="function">
    <text evidence="1 2">Calcium-binding.</text>
</comment>
<comment type="tissue specificity">
    <text evidence="1 2">Shell nacre.</text>
</comment>
<comment type="PTM">
    <text evidence="1 2">Glycosylated.</text>
</comment>
<comment type="miscellaneous">
    <text>On the 2D-gel the determined pI of this protein is: 4, its MW is: 95 kDa.</text>
</comment>
<proteinExistence type="evidence at protein level"/>
<reference key="1">
    <citation type="journal article" date="2008" name="ChemBioChem">
        <title>Nacre calcification in the freshwater mussel Unio pictorum: carbonic anhydrase activity and purification of a 95 kDa calcium-binding glycoprotein.</title>
        <authorList>
            <person name="Marie B."/>
            <person name="Luquet G."/>
            <person name="Bedouet L."/>
            <person name="Milet C."/>
            <person name="Guichard N."/>
            <person name="Medakovic D."/>
            <person name="Marin F."/>
        </authorList>
    </citation>
    <scope>PROTEIN SEQUENCE</scope>
    <scope>FUNCTION</scope>
    <scope>TISSUE SPECIFICITY</scope>
    <scope>GLYCOSYLATION</scope>
    <source>
        <tissue>Shell</tissue>
    </source>
</reference>
<reference evidence="3" key="2">
    <citation type="journal article" date="2007" name="FEBS J.">
        <title>The shell matrix of the freshwater mussel Unio pictorum (Paleoheterodonta, Unionoida). Involvement of acidic polysaccharides from glycoproteins in nacre mineralization.</title>
        <authorList>
            <person name="Marie B."/>
            <person name="Luquet G."/>
            <person name="Pais De Barros J.-P."/>
            <person name="Guichard N."/>
            <person name="Morel S."/>
            <person name="Alcaraz G."/>
            <person name="Bollache L."/>
            <person name="Marin F."/>
        </authorList>
    </citation>
    <scope>IDENTIFICATION</scope>
    <scope>FUNCTION</scope>
    <scope>TISSUE SPECIFICITY</scope>
    <scope>GLYCOSYLATION</scope>
</reference>
<accession>P85508</accession>
<protein>
    <recommendedName>
        <fullName>Calcium-binding shell glycoprotein P95</fullName>
    </recommendedName>
</protein>
<organism>
    <name type="scientific">Unio pictorum</name>
    <name type="common">Painter's mussel</name>
    <dbReference type="NCBI Taxonomy" id="55837"/>
    <lineage>
        <taxon>Eukaryota</taxon>
        <taxon>Metazoa</taxon>
        <taxon>Spiralia</taxon>
        <taxon>Lophotrochozoa</taxon>
        <taxon>Mollusca</taxon>
        <taxon>Bivalvia</taxon>
        <taxon>Autobranchia</taxon>
        <taxon>Heteroconchia</taxon>
        <taxon>Palaeoheterodonta</taxon>
        <taxon>Unionida</taxon>
        <taxon>Unionoidea</taxon>
        <taxon>Unionidae</taxon>
        <taxon>Unioninae</taxon>
        <taxon>Unio</taxon>
    </lineage>
</organism>
<feature type="chain" id="PRO_0000353205" description="Calcium-binding shell glycoprotein P95">
    <location>
        <begin position="1" status="less than"/>
        <end position="18" status="greater than"/>
    </location>
</feature>
<feature type="unsure residue" description="L or I">
    <location>
        <position position="13"/>
    </location>
</feature>
<feature type="unsure residue" description="L or I">
    <location>
        <position position="14"/>
    </location>
</feature>
<feature type="non-consecutive residues" evidence="3">
    <location>
        <begin position="9"/>
        <end position="10"/>
    </location>
</feature>
<feature type="non-terminal residue">
    <location>
        <position position="1"/>
    </location>
</feature>
<feature type="non-terminal residue">
    <location>
        <position position="18"/>
    </location>
</feature>